<organism>
    <name type="scientific">Borrelia turicatae (strain 91E135)</name>
    <dbReference type="NCBI Taxonomy" id="314724"/>
    <lineage>
        <taxon>Bacteria</taxon>
        <taxon>Pseudomonadati</taxon>
        <taxon>Spirochaetota</taxon>
        <taxon>Spirochaetia</taxon>
        <taxon>Spirochaetales</taxon>
        <taxon>Borreliaceae</taxon>
        <taxon>Borrelia</taxon>
    </lineage>
</organism>
<protein>
    <recommendedName>
        <fullName evidence="1">tRNA modification GTPase MnmE</fullName>
        <ecNumber evidence="1">3.6.-.-</ecNumber>
    </recommendedName>
</protein>
<dbReference type="EC" id="3.6.-.-" evidence="1"/>
<dbReference type="EMBL" id="CP000049">
    <property type="protein sequence ID" value="AAX17516.1"/>
    <property type="molecule type" value="Genomic_DNA"/>
</dbReference>
<dbReference type="RefSeq" id="WP_011772135.1">
    <property type="nucleotide sequence ID" value="NC_008710.1"/>
</dbReference>
<dbReference type="SMR" id="A1QYX4"/>
<dbReference type="KEGG" id="btu:BT0179"/>
<dbReference type="eggNOG" id="COG0486">
    <property type="taxonomic scope" value="Bacteria"/>
</dbReference>
<dbReference type="HOGENOM" id="CLU_019624_4_1_12"/>
<dbReference type="Proteomes" id="UP000001205">
    <property type="component" value="Chromosome"/>
</dbReference>
<dbReference type="GO" id="GO:0005829">
    <property type="term" value="C:cytosol"/>
    <property type="evidence" value="ECO:0007669"/>
    <property type="project" value="TreeGrafter"/>
</dbReference>
<dbReference type="GO" id="GO:0005525">
    <property type="term" value="F:GTP binding"/>
    <property type="evidence" value="ECO:0007669"/>
    <property type="project" value="UniProtKB-UniRule"/>
</dbReference>
<dbReference type="GO" id="GO:0003924">
    <property type="term" value="F:GTPase activity"/>
    <property type="evidence" value="ECO:0007669"/>
    <property type="project" value="UniProtKB-UniRule"/>
</dbReference>
<dbReference type="GO" id="GO:0046872">
    <property type="term" value="F:metal ion binding"/>
    <property type="evidence" value="ECO:0007669"/>
    <property type="project" value="UniProtKB-KW"/>
</dbReference>
<dbReference type="GO" id="GO:0030488">
    <property type="term" value="P:tRNA methylation"/>
    <property type="evidence" value="ECO:0007669"/>
    <property type="project" value="TreeGrafter"/>
</dbReference>
<dbReference type="GO" id="GO:0002098">
    <property type="term" value="P:tRNA wobble uridine modification"/>
    <property type="evidence" value="ECO:0007669"/>
    <property type="project" value="TreeGrafter"/>
</dbReference>
<dbReference type="CDD" id="cd04164">
    <property type="entry name" value="trmE"/>
    <property type="match status" value="1"/>
</dbReference>
<dbReference type="CDD" id="cd14858">
    <property type="entry name" value="TrmE_N"/>
    <property type="match status" value="1"/>
</dbReference>
<dbReference type="Gene3D" id="3.40.50.300">
    <property type="entry name" value="P-loop containing nucleotide triphosphate hydrolases"/>
    <property type="match status" value="1"/>
</dbReference>
<dbReference type="Gene3D" id="3.30.1360.120">
    <property type="entry name" value="Probable tRNA modification gtpase trme, domain 1"/>
    <property type="match status" value="1"/>
</dbReference>
<dbReference type="Gene3D" id="1.20.120.430">
    <property type="entry name" value="tRNA modification GTPase MnmE domain 2"/>
    <property type="match status" value="1"/>
</dbReference>
<dbReference type="HAMAP" id="MF_00379">
    <property type="entry name" value="GTPase_MnmE"/>
    <property type="match status" value="1"/>
</dbReference>
<dbReference type="InterPro" id="IPR031168">
    <property type="entry name" value="G_TrmE"/>
</dbReference>
<dbReference type="InterPro" id="IPR006073">
    <property type="entry name" value="GTP-bd"/>
</dbReference>
<dbReference type="InterPro" id="IPR018948">
    <property type="entry name" value="GTP-bd_TrmE_N"/>
</dbReference>
<dbReference type="InterPro" id="IPR004520">
    <property type="entry name" value="GTPase_MnmE"/>
</dbReference>
<dbReference type="InterPro" id="IPR027368">
    <property type="entry name" value="MnmE_dom2"/>
</dbReference>
<dbReference type="InterPro" id="IPR025867">
    <property type="entry name" value="MnmE_helical"/>
</dbReference>
<dbReference type="InterPro" id="IPR027417">
    <property type="entry name" value="P-loop_NTPase"/>
</dbReference>
<dbReference type="InterPro" id="IPR005225">
    <property type="entry name" value="Small_GTP-bd"/>
</dbReference>
<dbReference type="InterPro" id="IPR027266">
    <property type="entry name" value="TrmE/GcvT_dom1"/>
</dbReference>
<dbReference type="NCBIfam" id="TIGR00450">
    <property type="entry name" value="mnmE_trmE_thdF"/>
    <property type="match status" value="1"/>
</dbReference>
<dbReference type="NCBIfam" id="TIGR00231">
    <property type="entry name" value="small_GTP"/>
    <property type="match status" value="1"/>
</dbReference>
<dbReference type="PANTHER" id="PTHR42714">
    <property type="entry name" value="TRNA MODIFICATION GTPASE GTPBP3"/>
    <property type="match status" value="1"/>
</dbReference>
<dbReference type="PANTHER" id="PTHR42714:SF2">
    <property type="entry name" value="TRNA MODIFICATION GTPASE GTPBP3, MITOCHONDRIAL"/>
    <property type="match status" value="1"/>
</dbReference>
<dbReference type="Pfam" id="PF01926">
    <property type="entry name" value="MMR_HSR1"/>
    <property type="match status" value="1"/>
</dbReference>
<dbReference type="Pfam" id="PF12631">
    <property type="entry name" value="MnmE_helical"/>
    <property type="match status" value="1"/>
</dbReference>
<dbReference type="Pfam" id="PF10396">
    <property type="entry name" value="TrmE_N"/>
    <property type="match status" value="1"/>
</dbReference>
<dbReference type="SUPFAM" id="SSF52540">
    <property type="entry name" value="P-loop containing nucleoside triphosphate hydrolases"/>
    <property type="match status" value="1"/>
</dbReference>
<dbReference type="PROSITE" id="PS51709">
    <property type="entry name" value="G_TRME"/>
    <property type="match status" value="1"/>
</dbReference>
<name>MNME_BORT9</name>
<keyword id="KW-0963">Cytoplasm</keyword>
<keyword id="KW-0342">GTP-binding</keyword>
<keyword id="KW-0378">Hydrolase</keyword>
<keyword id="KW-0460">Magnesium</keyword>
<keyword id="KW-0479">Metal-binding</keyword>
<keyword id="KW-0547">Nucleotide-binding</keyword>
<keyword id="KW-0630">Potassium</keyword>
<keyword id="KW-1185">Reference proteome</keyword>
<keyword id="KW-0819">tRNA processing</keyword>
<sequence>MSNLFQREDDIVALATPLLSSALCVIRSSGISSIEKFSKMFSDPKRLLEASGHTIHYGYLIDKEICEKLDEVVVCIYRAPKSFTGQNSIEVMAHGSPIGIKRIIGCFLKVGFRMAEPGEFTLRAFLAGKLDLTKAEAVNELISAKTNKTHSLAVNKLSGSLFAKIDLIKKDILNFLSALSVHLDYETSEYEVAIPFEIISKSRDELKRLVDSYNTARKLDYGIALVLAGSVNVGKSSLFNLLLKEDRAIVSSYAGTTRDYIQASFEFDGILFNVFDTAGLRETTDFVEQLGIVKSNSLIKEASLVLYVIDLSARLTNDDLKFIDSYKGHSKVIFVLNKMDLEPNRQTVEFFNSGNINSSNLVKISTKTLFGIDSLYDKIRSLTCFDYIDIDAYDVIVSSSRQAELLKKAYTLIIELLNKIEKDISYDMLAFDVYEVLNFLGEITGEVTSEDVLNNMFKNFCLGK</sequence>
<feature type="chain" id="PRO_1000197040" description="tRNA modification GTPase MnmE">
    <location>
        <begin position="1"/>
        <end position="464"/>
    </location>
</feature>
<feature type="domain" description="TrmE-type G">
    <location>
        <begin position="222"/>
        <end position="384"/>
    </location>
</feature>
<feature type="binding site" evidence="1">
    <location>
        <position position="27"/>
    </location>
    <ligand>
        <name>(6S)-5-formyl-5,6,7,8-tetrahydrofolate</name>
        <dbReference type="ChEBI" id="CHEBI:57457"/>
    </ligand>
</feature>
<feature type="binding site" evidence="1">
    <location>
        <position position="90"/>
    </location>
    <ligand>
        <name>(6S)-5-formyl-5,6,7,8-tetrahydrofolate</name>
        <dbReference type="ChEBI" id="CHEBI:57457"/>
    </ligand>
</feature>
<feature type="binding site" evidence="1">
    <location>
        <position position="129"/>
    </location>
    <ligand>
        <name>(6S)-5-formyl-5,6,7,8-tetrahydrofolate</name>
        <dbReference type="ChEBI" id="CHEBI:57457"/>
    </ligand>
</feature>
<feature type="binding site" evidence="1">
    <location>
        <begin position="232"/>
        <end position="237"/>
    </location>
    <ligand>
        <name>GTP</name>
        <dbReference type="ChEBI" id="CHEBI:37565"/>
    </ligand>
</feature>
<feature type="binding site" evidence="1">
    <location>
        <position position="236"/>
    </location>
    <ligand>
        <name>Mg(2+)</name>
        <dbReference type="ChEBI" id="CHEBI:18420"/>
    </ligand>
</feature>
<feature type="binding site" evidence="1">
    <location>
        <begin position="251"/>
        <end position="257"/>
    </location>
    <ligand>
        <name>GTP</name>
        <dbReference type="ChEBI" id="CHEBI:37565"/>
    </ligand>
</feature>
<feature type="binding site" evidence="1">
    <location>
        <position position="257"/>
    </location>
    <ligand>
        <name>Mg(2+)</name>
        <dbReference type="ChEBI" id="CHEBI:18420"/>
    </ligand>
</feature>
<feature type="binding site" evidence="1">
    <location>
        <begin position="276"/>
        <end position="279"/>
    </location>
    <ligand>
        <name>GTP</name>
        <dbReference type="ChEBI" id="CHEBI:37565"/>
    </ligand>
</feature>
<feature type="binding site" evidence="1">
    <location>
        <position position="464"/>
    </location>
    <ligand>
        <name>(6S)-5-formyl-5,6,7,8-tetrahydrofolate</name>
        <dbReference type="ChEBI" id="CHEBI:57457"/>
    </ligand>
</feature>
<comment type="function">
    <text evidence="1">Exhibits a very high intrinsic GTPase hydrolysis rate. Involved in the addition of a carboxymethylaminomethyl (cmnm) group at the wobble position (U34) of certain tRNAs, forming tRNA-cmnm(5)s(2)U34.</text>
</comment>
<comment type="cofactor">
    <cofactor evidence="1">
        <name>K(+)</name>
        <dbReference type="ChEBI" id="CHEBI:29103"/>
    </cofactor>
    <text evidence="1">Binds 1 potassium ion per subunit.</text>
</comment>
<comment type="subunit">
    <text evidence="1">Homodimer. Heterotetramer of two MnmE and two MnmG subunits.</text>
</comment>
<comment type="subcellular location">
    <subcellularLocation>
        <location evidence="1">Cytoplasm</location>
    </subcellularLocation>
</comment>
<comment type="similarity">
    <text evidence="1">Belongs to the TRAFAC class TrmE-Era-EngA-EngB-Septin-like GTPase superfamily. TrmE GTPase family.</text>
</comment>
<accession>A1QYX4</accession>
<proteinExistence type="inferred from homology"/>
<evidence type="ECO:0000255" key="1">
    <source>
        <dbReference type="HAMAP-Rule" id="MF_00379"/>
    </source>
</evidence>
<reference key="1">
    <citation type="submission" date="2004-12" db="EMBL/GenBank/DDBJ databases">
        <title>The genome sequence of Borrelia hermsii and Borrelia turicatae: comparative analysis of two agents of endemic N. America relapsing fever.</title>
        <authorList>
            <person name="Porcella S.F."/>
            <person name="Raffel S.J."/>
            <person name="Schrumpf M.E."/>
            <person name="Montgomery B."/>
            <person name="Smith T."/>
            <person name="Schwan T.G."/>
        </authorList>
    </citation>
    <scope>NUCLEOTIDE SEQUENCE [LARGE SCALE GENOMIC DNA]</scope>
    <source>
        <strain>91E135</strain>
    </source>
</reference>
<gene>
    <name evidence="1" type="primary">mnmE</name>
    <name evidence="1" type="synonym">trmE</name>
    <name type="ordered locus">BT0179</name>
</gene>